<feature type="chain" id="PRO_0000373713" description="Uncharacterized protein DP63R">
    <location>
        <begin position="1"/>
        <end position="73"/>
    </location>
</feature>
<comment type="similarity">
    <text evidence="1">Belongs to the asfivirus DP63R family.</text>
</comment>
<name>VF63R_ASFP4</name>
<protein>
    <recommendedName>
        <fullName>Uncharacterized protein DP63R</fullName>
    </recommendedName>
</protein>
<sequence>MWFCIDLGADAFKEAGVLAGKKNRRVLQYILGLNIFKRELIPPCKDPDPYQIQILLKNYILKNVSTVFTYYCQ</sequence>
<reference key="1">
    <citation type="submission" date="2003-03" db="EMBL/GenBank/DDBJ databases">
        <title>African swine fever virus genomes.</title>
        <authorList>
            <person name="Kutish G.F."/>
            <person name="Rock D.L."/>
        </authorList>
    </citation>
    <scope>NUCLEOTIDE SEQUENCE [LARGE SCALE GENOMIC DNA]</scope>
</reference>
<gene>
    <name type="ordered locus">Pret-161</name>
</gene>
<organismHost>
    <name type="scientific">Ornithodoros</name>
    <name type="common">relapsing fever ticks</name>
    <dbReference type="NCBI Taxonomy" id="6937"/>
</organismHost>
<organismHost>
    <name type="scientific">Phacochoerus aethiopicus</name>
    <name type="common">Warthog</name>
    <dbReference type="NCBI Taxonomy" id="85517"/>
</organismHost>
<organismHost>
    <name type="scientific">Phacochoerus africanus</name>
    <name type="common">Warthog</name>
    <dbReference type="NCBI Taxonomy" id="41426"/>
</organismHost>
<organismHost>
    <name type="scientific">Potamochoerus larvatus</name>
    <name type="common">Bushpig</name>
    <dbReference type="NCBI Taxonomy" id="273792"/>
</organismHost>
<organismHost>
    <name type="scientific">Sus scrofa</name>
    <name type="common">Pig</name>
    <dbReference type="NCBI Taxonomy" id="9823"/>
</organismHost>
<proteinExistence type="inferred from homology"/>
<accession>P0CAI9</accession>
<evidence type="ECO:0000305" key="1"/>
<dbReference type="EMBL" id="AY261363">
    <property type="status" value="NOT_ANNOTATED_CDS"/>
    <property type="molecule type" value="Genomic_DNA"/>
</dbReference>
<dbReference type="Proteomes" id="UP000000859">
    <property type="component" value="Segment"/>
</dbReference>
<dbReference type="GO" id="GO:0042330">
    <property type="term" value="P:taxis"/>
    <property type="evidence" value="ECO:0007669"/>
    <property type="project" value="InterPro"/>
</dbReference>
<dbReference type="InterPro" id="IPR002595">
    <property type="entry name" value="ASFV_MGF360"/>
</dbReference>
<dbReference type="Pfam" id="PF01671">
    <property type="entry name" value="ASFV_360"/>
    <property type="match status" value="1"/>
</dbReference>
<organism>
    <name type="scientific">African swine fever virus (isolate Tick/South Africa/Pretoriuskop Pr4/1996)</name>
    <name type="common">ASFV</name>
    <dbReference type="NCBI Taxonomy" id="561443"/>
    <lineage>
        <taxon>Viruses</taxon>
        <taxon>Varidnaviria</taxon>
        <taxon>Bamfordvirae</taxon>
        <taxon>Nucleocytoviricota</taxon>
        <taxon>Pokkesviricetes</taxon>
        <taxon>Asfuvirales</taxon>
        <taxon>Asfarviridae</taxon>
        <taxon>Asfivirus</taxon>
        <taxon>African swine fever virus</taxon>
    </lineage>
</organism>